<protein>
    <recommendedName>
        <fullName evidence="1">Glutamate-1-semialdehyde 2,1-aminomutase</fullName>
        <shortName evidence="1">GSA</shortName>
        <ecNumber evidence="1">5.4.3.8</ecNumber>
    </recommendedName>
    <alternativeName>
        <fullName evidence="1">Glutamate-1-semialdehyde aminotransferase</fullName>
        <shortName evidence="1">GSA-AT</shortName>
    </alternativeName>
</protein>
<dbReference type="EC" id="5.4.3.8" evidence="1"/>
<dbReference type="EMBL" id="CP000554">
    <property type="protein sequence ID" value="ABM77447.1"/>
    <property type="molecule type" value="Genomic_DNA"/>
</dbReference>
<dbReference type="SMR" id="A2C7I7"/>
<dbReference type="STRING" id="59922.P9303_06961"/>
<dbReference type="KEGG" id="pmf:P9303_06961"/>
<dbReference type="HOGENOM" id="CLU_016922_1_5_3"/>
<dbReference type="BioCyc" id="PMAR59922:G1G80-641-MONOMER"/>
<dbReference type="UniPathway" id="UPA00251">
    <property type="reaction ID" value="UER00317"/>
</dbReference>
<dbReference type="UniPathway" id="UPA00668"/>
<dbReference type="Proteomes" id="UP000002274">
    <property type="component" value="Chromosome"/>
</dbReference>
<dbReference type="GO" id="GO:0005737">
    <property type="term" value="C:cytoplasm"/>
    <property type="evidence" value="ECO:0007669"/>
    <property type="project" value="UniProtKB-SubCell"/>
</dbReference>
<dbReference type="GO" id="GO:0042286">
    <property type="term" value="F:glutamate-1-semialdehyde 2,1-aminomutase activity"/>
    <property type="evidence" value="ECO:0007669"/>
    <property type="project" value="UniProtKB-UniRule"/>
</dbReference>
<dbReference type="GO" id="GO:0030170">
    <property type="term" value="F:pyridoxal phosphate binding"/>
    <property type="evidence" value="ECO:0007669"/>
    <property type="project" value="InterPro"/>
</dbReference>
<dbReference type="GO" id="GO:0008483">
    <property type="term" value="F:transaminase activity"/>
    <property type="evidence" value="ECO:0007669"/>
    <property type="project" value="InterPro"/>
</dbReference>
<dbReference type="GO" id="GO:0015995">
    <property type="term" value="P:chlorophyll biosynthetic process"/>
    <property type="evidence" value="ECO:0007669"/>
    <property type="project" value="UniProtKB-UniRule"/>
</dbReference>
<dbReference type="GO" id="GO:0006782">
    <property type="term" value="P:protoporphyrinogen IX biosynthetic process"/>
    <property type="evidence" value="ECO:0007669"/>
    <property type="project" value="UniProtKB-UniRule"/>
</dbReference>
<dbReference type="CDD" id="cd00610">
    <property type="entry name" value="OAT_like"/>
    <property type="match status" value="1"/>
</dbReference>
<dbReference type="FunFam" id="3.40.640.10:FF:000021">
    <property type="entry name" value="Glutamate-1-semialdehyde 2,1-aminomutase"/>
    <property type="match status" value="1"/>
</dbReference>
<dbReference type="Gene3D" id="3.90.1150.10">
    <property type="entry name" value="Aspartate Aminotransferase, domain 1"/>
    <property type="match status" value="1"/>
</dbReference>
<dbReference type="Gene3D" id="3.40.640.10">
    <property type="entry name" value="Type I PLP-dependent aspartate aminotransferase-like (Major domain)"/>
    <property type="match status" value="1"/>
</dbReference>
<dbReference type="HAMAP" id="MF_00375">
    <property type="entry name" value="HemL_aminotrans_3"/>
    <property type="match status" value="1"/>
</dbReference>
<dbReference type="InterPro" id="IPR004639">
    <property type="entry name" value="4pyrrol_synth_GluAld_NH2Trfase"/>
</dbReference>
<dbReference type="InterPro" id="IPR005814">
    <property type="entry name" value="Aminotrans_3"/>
</dbReference>
<dbReference type="InterPro" id="IPR049704">
    <property type="entry name" value="Aminotrans_3_PPA_site"/>
</dbReference>
<dbReference type="InterPro" id="IPR015424">
    <property type="entry name" value="PyrdxlP-dep_Trfase"/>
</dbReference>
<dbReference type="InterPro" id="IPR015421">
    <property type="entry name" value="PyrdxlP-dep_Trfase_major"/>
</dbReference>
<dbReference type="InterPro" id="IPR015422">
    <property type="entry name" value="PyrdxlP-dep_Trfase_small"/>
</dbReference>
<dbReference type="NCBIfam" id="TIGR00713">
    <property type="entry name" value="hemL"/>
    <property type="match status" value="1"/>
</dbReference>
<dbReference type="NCBIfam" id="NF000818">
    <property type="entry name" value="PRK00062.1"/>
    <property type="match status" value="1"/>
</dbReference>
<dbReference type="PANTHER" id="PTHR43713">
    <property type="entry name" value="GLUTAMATE-1-SEMIALDEHYDE 2,1-AMINOMUTASE"/>
    <property type="match status" value="1"/>
</dbReference>
<dbReference type="PANTHER" id="PTHR43713:SF3">
    <property type="entry name" value="GLUTAMATE-1-SEMIALDEHYDE 2,1-AMINOMUTASE 1, CHLOROPLASTIC-RELATED"/>
    <property type="match status" value="1"/>
</dbReference>
<dbReference type="Pfam" id="PF00202">
    <property type="entry name" value="Aminotran_3"/>
    <property type="match status" value="1"/>
</dbReference>
<dbReference type="SUPFAM" id="SSF53383">
    <property type="entry name" value="PLP-dependent transferases"/>
    <property type="match status" value="1"/>
</dbReference>
<dbReference type="PROSITE" id="PS00600">
    <property type="entry name" value="AA_TRANSFER_CLASS_3"/>
    <property type="match status" value="1"/>
</dbReference>
<sequence>MNTSRSQAIFSAAQRLMPGGVSSPVRAFRSVGGQPIVFDRVKGAYAWDVDGNRFIDYIGSWGPAICGHAHPEVIAALQDALEKGTSFGAPCELENQLAEMVIDAVPSVEMVRFVNSGTEACMSVLRLMRAFTGRDKLIKFEGCYHGHADMFLVKAGSGVATLGLPDSPGVPRSTTSNTLTAPYNDLEAVKELFAENPDAISGVILEPVVGNAGFITPEPGFLEGLRELTREHGALLVFDEVMSGFRISYGGAQARFGVTPDLTTMGKVIGGGLPVGAYGGRAEIMEMVAPAGPMYQAGTLSGNPLAMTAGIKTLELLKQEGTYERLESTTERLINGILEAAKAAEVPITGNSIGAMFGFFLCEGPVRNFEDAKATDAERFGKLHRAMLERGIYLAPSAFEAGFTSLAHSEADIETTLKAFRESFAAVA</sequence>
<gene>
    <name evidence="1" type="primary">hemL</name>
    <name type="ordered locus">P9303_06961</name>
</gene>
<reference key="1">
    <citation type="journal article" date="2007" name="PLoS Genet.">
        <title>Patterns and implications of gene gain and loss in the evolution of Prochlorococcus.</title>
        <authorList>
            <person name="Kettler G.C."/>
            <person name="Martiny A.C."/>
            <person name="Huang K."/>
            <person name="Zucker J."/>
            <person name="Coleman M.L."/>
            <person name="Rodrigue S."/>
            <person name="Chen F."/>
            <person name="Lapidus A."/>
            <person name="Ferriera S."/>
            <person name="Johnson J."/>
            <person name="Steglich C."/>
            <person name="Church G.M."/>
            <person name="Richardson P."/>
            <person name="Chisholm S.W."/>
        </authorList>
    </citation>
    <scope>NUCLEOTIDE SEQUENCE [LARGE SCALE GENOMIC DNA]</scope>
    <source>
        <strain>MIT 9303</strain>
    </source>
</reference>
<evidence type="ECO:0000255" key="1">
    <source>
        <dbReference type="HAMAP-Rule" id="MF_00375"/>
    </source>
</evidence>
<name>GSA_PROM3</name>
<proteinExistence type="inferred from homology"/>
<accession>A2C7I7</accession>
<organism>
    <name type="scientific">Prochlorococcus marinus (strain MIT 9303)</name>
    <dbReference type="NCBI Taxonomy" id="59922"/>
    <lineage>
        <taxon>Bacteria</taxon>
        <taxon>Bacillati</taxon>
        <taxon>Cyanobacteriota</taxon>
        <taxon>Cyanophyceae</taxon>
        <taxon>Synechococcales</taxon>
        <taxon>Prochlorococcaceae</taxon>
        <taxon>Prochlorococcus</taxon>
    </lineage>
</organism>
<keyword id="KW-0149">Chlorophyll biosynthesis</keyword>
<keyword id="KW-0963">Cytoplasm</keyword>
<keyword id="KW-0413">Isomerase</keyword>
<keyword id="KW-0627">Porphyrin biosynthesis</keyword>
<keyword id="KW-0663">Pyridoxal phosphate</keyword>
<comment type="catalytic activity">
    <reaction evidence="1">
        <text>(S)-4-amino-5-oxopentanoate = 5-aminolevulinate</text>
        <dbReference type="Rhea" id="RHEA:14265"/>
        <dbReference type="ChEBI" id="CHEBI:57501"/>
        <dbReference type="ChEBI" id="CHEBI:356416"/>
        <dbReference type="EC" id="5.4.3.8"/>
    </reaction>
</comment>
<comment type="cofactor">
    <cofactor evidence="1">
        <name>pyridoxal 5'-phosphate</name>
        <dbReference type="ChEBI" id="CHEBI:597326"/>
    </cofactor>
</comment>
<comment type="pathway">
    <text evidence="1">Porphyrin-containing compound metabolism; protoporphyrin-IX biosynthesis; 5-aminolevulinate from L-glutamyl-tRNA(Glu): step 2/2.</text>
</comment>
<comment type="pathway">
    <text evidence="1">Porphyrin-containing compound metabolism; chlorophyll biosynthesis.</text>
</comment>
<comment type="subunit">
    <text evidence="1">Homodimer.</text>
</comment>
<comment type="subcellular location">
    <subcellularLocation>
        <location evidence="1">Cytoplasm</location>
    </subcellularLocation>
</comment>
<comment type="similarity">
    <text evidence="1">Belongs to the class-III pyridoxal-phosphate-dependent aminotransferase family. HemL subfamily.</text>
</comment>
<feature type="chain" id="PRO_0000300934" description="Glutamate-1-semialdehyde 2,1-aminomutase">
    <location>
        <begin position="1"/>
        <end position="428"/>
    </location>
</feature>
<feature type="modified residue" description="N6-(pyridoxal phosphate)lysine" evidence="1">
    <location>
        <position position="267"/>
    </location>
</feature>